<name>Y1587_LACP3</name>
<gene>
    <name type="ordered locus">LSEI_1587</name>
</gene>
<sequence length="89" mass="10447">MATKTYYFYVLLCADGSFYGGFTDDVKARVATHNAGKGAKYTAQRLPVRLLYHQAFADKHDALSAEWHFKHQTRHRKEVFLEDHQVEWR</sequence>
<dbReference type="EMBL" id="CP000423">
    <property type="protein sequence ID" value="ABJ70361.1"/>
    <property type="molecule type" value="Genomic_DNA"/>
</dbReference>
<dbReference type="RefSeq" id="WP_003660754.1">
    <property type="nucleotide sequence ID" value="NC_008526.1"/>
</dbReference>
<dbReference type="RefSeq" id="YP_806803.1">
    <property type="nucleotide sequence ID" value="NC_008526.1"/>
</dbReference>
<dbReference type="SMR" id="Q038L1"/>
<dbReference type="STRING" id="321967.LSEI_1587"/>
<dbReference type="PaxDb" id="321967-LSEI_1587"/>
<dbReference type="KEGG" id="lca:LSEI_1587"/>
<dbReference type="PATRIC" id="fig|321967.11.peg.1568"/>
<dbReference type="HOGENOM" id="CLU_135650_0_3_9"/>
<dbReference type="Proteomes" id="UP000001651">
    <property type="component" value="Chromosome"/>
</dbReference>
<dbReference type="CDD" id="cd10456">
    <property type="entry name" value="GIY-YIG_UPF0213"/>
    <property type="match status" value="1"/>
</dbReference>
<dbReference type="Gene3D" id="3.40.1440.10">
    <property type="entry name" value="GIY-YIG endonuclease"/>
    <property type="match status" value="1"/>
</dbReference>
<dbReference type="InterPro" id="IPR000305">
    <property type="entry name" value="GIY-YIG_endonuc"/>
</dbReference>
<dbReference type="InterPro" id="IPR035901">
    <property type="entry name" value="GIY-YIG_endonuc_sf"/>
</dbReference>
<dbReference type="InterPro" id="IPR050190">
    <property type="entry name" value="UPF0213_domain"/>
</dbReference>
<dbReference type="PANTHER" id="PTHR34477">
    <property type="entry name" value="UPF0213 PROTEIN YHBQ"/>
    <property type="match status" value="1"/>
</dbReference>
<dbReference type="PANTHER" id="PTHR34477:SF1">
    <property type="entry name" value="UPF0213 PROTEIN YHBQ"/>
    <property type="match status" value="1"/>
</dbReference>
<dbReference type="Pfam" id="PF01541">
    <property type="entry name" value="GIY-YIG"/>
    <property type="match status" value="1"/>
</dbReference>
<dbReference type="SUPFAM" id="SSF82771">
    <property type="entry name" value="GIY-YIG endonuclease"/>
    <property type="match status" value="1"/>
</dbReference>
<dbReference type="PROSITE" id="PS50164">
    <property type="entry name" value="GIY_YIG"/>
    <property type="match status" value="1"/>
</dbReference>
<keyword id="KW-1185">Reference proteome</keyword>
<feature type="chain" id="PRO_1000063668" description="UPF0213 protein LSEI_1587">
    <location>
        <begin position="1"/>
        <end position="89"/>
    </location>
</feature>
<feature type="domain" description="GIY-YIG" evidence="1">
    <location>
        <begin position="4"/>
        <end position="79"/>
    </location>
</feature>
<accession>Q038L1</accession>
<protein>
    <recommendedName>
        <fullName>UPF0213 protein LSEI_1587</fullName>
    </recommendedName>
</protein>
<proteinExistence type="inferred from homology"/>
<evidence type="ECO:0000255" key="1">
    <source>
        <dbReference type="PROSITE-ProRule" id="PRU00977"/>
    </source>
</evidence>
<evidence type="ECO:0000305" key="2"/>
<reference key="1">
    <citation type="journal article" date="2006" name="Proc. Natl. Acad. Sci. U.S.A.">
        <title>Comparative genomics of the lactic acid bacteria.</title>
        <authorList>
            <person name="Makarova K.S."/>
            <person name="Slesarev A."/>
            <person name="Wolf Y.I."/>
            <person name="Sorokin A."/>
            <person name="Mirkin B."/>
            <person name="Koonin E.V."/>
            <person name="Pavlov A."/>
            <person name="Pavlova N."/>
            <person name="Karamychev V."/>
            <person name="Polouchine N."/>
            <person name="Shakhova V."/>
            <person name="Grigoriev I."/>
            <person name="Lou Y."/>
            <person name="Rohksar D."/>
            <person name="Lucas S."/>
            <person name="Huang K."/>
            <person name="Goodstein D.M."/>
            <person name="Hawkins T."/>
            <person name="Plengvidhya V."/>
            <person name="Welker D."/>
            <person name="Hughes J."/>
            <person name="Goh Y."/>
            <person name="Benson A."/>
            <person name="Baldwin K."/>
            <person name="Lee J.-H."/>
            <person name="Diaz-Muniz I."/>
            <person name="Dosti B."/>
            <person name="Smeianov V."/>
            <person name="Wechter W."/>
            <person name="Barabote R."/>
            <person name="Lorca G."/>
            <person name="Altermann E."/>
            <person name="Barrangou R."/>
            <person name="Ganesan B."/>
            <person name="Xie Y."/>
            <person name="Rawsthorne H."/>
            <person name="Tamir D."/>
            <person name="Parker C."/>
            <person name="Breidt F."/>
            <person name="Broadbent J.R."/>
            <person name="Hutkins R."/>
            <person name="O'Sullivan D."/>
            <person name="Steele J."/>
            <person name="Unlu G."/>
            <person name="Saier M.H. Jr."/>
            <person name="Klaenhammer T."/>
            <person name="Richardson P."/>
            <person name="Kozyavkin S."/>
            <person name="Weimer B.C."/>
            <person name="Mills D.A."/>
        </authorList>
    </citation>
    <scope>NUCLEOTIDE SEQUENCE [LARGE SCALE GENOMIC DNA]</scope>
    <source>
        <strain>ATCC 334 / BCRC 17002 / CCUG 31169 / CIP 107868 / KCTC 3260 / NRRL B-441</strain>
    </source>
</reference>
<comment type="similarity">
    <text evidence="2">Belongs to the UPF0213 family.</text>
</comment>
<organism>
    <name type="scientific">Lacticaseibacillus paracasei (strain ATCC 334 / BCRC 17002 / CCUG 31169 / CIP 107868 / KCTC 3260 / NRRL B-441)</name>
    <name type="common">Lactobacillus paracasei</name>
    <dbReference type="NCBI Taxonomy" id="321967"/>
    <lineage>
        <taxon>Bacteria</taxon>
        <taxon>Bacillati</taxon>
        <taxon>Bacillota</taxon>
        <taxon>Bacilli</taxon>
        <taxon>Lactobacillales</taxon>
        <taxon>Lactobacillaceae</taxon>
        <taxon>Lacticaseibacillus</taxon>
    </lineage>
</organism>